<reference key="1">
    <citation type="journal article" date="1989" name="Nature">
        <title>Molecular structure of the chick cerebellar kainate-binding subunit of a putative glutamate receptor.</title>
        <authorList>
            <person name="Gregor P."/>
            <person name="Mano I."/>
            <person name="Maoz I."/>
            <person name="McKeown M."/>
            <person name="Teichberg V.I."/>
        </authorList>
    </citation>
    <scope>NUCLEOTIDE SEQUENCE [MRNA]</scope>
    <scope>PARTIAL PROTEIN SEQUENCE</scope>
    <source>
        <tissue>Cerebellum</tissue>
    </source>
</reference>
<feature type="signal peptide">
    <location>
        <begin position="1"/>
        <end position="23"/>
    </location>
</feature>
<feature type="chain" id="PRO_0000011557" description="Probable glutamate receptor">
    <location>
        <begin position="24"/>
        <end position="487"/>
    </location>
</feature>
<feature type="topological domain" description="Extracellular" evidence="1">
    <location>
        <begin position="24"/>
        <end position="169"/>
    </location>
</feature>
<feature type="transmembrane region" description="Helical" evidence="1">
    <location>
        <begin position="170"/>
        <end position="190"/>
    </location>
</feature>
<feature type="topological domain" description="Cytoplasmic" evidence="1">
    <location>
        <begin position="191"/>
        <end position="235"/>
    </location>
</feature>
<feature type="transmembrane region" description="Helical" evidence="1">
    <location>
        <begin position="236"/>
        <end position="256"/>
    </location>
</feature>
<feature type="topological domain" description="Extracellular" evidence="1">
    <location>
        <begin position="257"/>
        <end position="419"/>
    </location>
</feature>
<feature type="transmembrane region" description="Helical" evidence="1">
    <location>
        <begin position="420"/>
        <end position="440"/>
    </location>
</feature>
<feature type="topological domain" description="Cytoplasmic" evidence="1">
    <location>
        <begin position="441"/>
        <end position="487"/>
    </location>
</feature>
<feature type="glycosylation site" description="N-linked (GlcNAc...) asparagine" evidence="1">
    <location>
        <position position="104"/>
    </location>
</feature>
<name>GLRK_CHICK</name>
<comment type="function">
    <text>Receptor for glutamate. L-glutamate acts as an excitatory neurotransmitter at many synapses in the central nervous system. The postsynaptic actions of Glu are mediated by a variety of receptors that are named according to their selective agonists.</text>
</comment>
<comment type="subcellular location">
    <subcellularLocation>
        <location>Cell membrane</location>
        <topology>Multi-pass membrane protein</topology>
    </subcellularLocation>
    <subcellularLocation>
        <location>Postsynaptic cell membrane</location>
        <topology>Multi-pass membrane protein</topology>
    </subcellularLocation>
</comment>
<comment type="similarity">
    <text evidence="2">Belongs to the glutamate-gated ion channel (TC 1.A.10.1) family.</text>
</comment>
<accession>P19439</accession>
<proteinExistence type="evidence at protein level"/>
<gene>
    <name type="primary">KBP</name>
</gene>
<dbReference type="EMBL" id="X17700">
    <property type="protein sequence ID" value="CAA35693.1"/>
    <property type="molecule type" value="mRNA"/>
</dbReference>
<dbReference type="PIR" id="S07062">
    <property type="entry name" value="S07062"/>
</dbReference>
<dbReference type="RefSeq" id="NP_990684.1">
    <property type="nucleotide sequence ID" value="NM_205353.3"/>
</dbReference>
<dbReference type="RefSeq" id="XP_024998256.1">
    <property type="nucleotide sequence ID" value="XM_025142488.3"/>
</dbReference>
<dbReference type="RefSeq" id="XP_046787121.1">
    <property type="nucleotide sequence ID" value="XM_046931165.1"/>
</dbReference>
<dbReference type="SMR" id="P19439"/>
<dbReference type="STRING" id="9031.ENSGALP00000001774"/>
<dbReference type="GlyCosmos" id="P19439">
    <property type="glycosylation" value="1 site, No reported glycans"/>
</dbReference>
<dbReference type="GlyGen" id="P19439">
    <property type="glycosylation" value="1 site"/>
</dbReference>
<dbReference type="PaxDb" id="9031-ENSGALP00000001774"/>
<dbReference type="GeneID" id="396300"/>
<dbReference type="KEGG" id="gga:396300"/>
<dbReference type="CTD" id="396300"/>
<dbReference type="VEuPathDB" id="HostDB:geneid_396300"/>
<dbReference type="eggNOG" id="KOG1052">
    <property type="taxonomic scope" value="Eukaryota"/>
</dbReference>
<dbReference type="HOGENOM" id="CLU_007257_0_0_1"/>
<dbReference type="InParanoid" id="P19439"/>
<dbReference type="OMA" id="GPFNYFE"/>
<dbReference type="OrthoDB" id="5984008at2759"/>
<dbReference type="PhylomeDB" id="P19439"/>
<dbReference type="TreeFam" id="TF315232"/>
<dbReference type="PRO" id="PR:P19439"/>
<dbReference type="Proteomes" id="UP000000539">
    <property type="component" value="Unassembled WGS sequence"/>
</dbReference>
<dbReference type="GO" id="GO:0032281">
    <property type="term" value="C:AMPA glutamate receptor complex"/>
    <property type="evidence" value="ECO:0000318"/>
    <property type="project" value="GO_Central"/>
</dbReference>
<dbReference type="GO" id="GO:0043197">
    <property type="term" value="C:dendritic spine"/>
    <property type="evidence" value="ECO:0000318"/>
    <property type="project" value="GO_Central"/>
</dbReference>
<dbReference type="GO" id="GO:0005886">
    <property type="term" value="C:plasma membrane"/>
    <property type="evidence" value="ECO:0000318"/>
    <property type="project" value="GO_Central"/>
</dbReference>
<dbReference type="GO" id="GO:0098839">
    <property type="term" value="C:postsynaptic density membrane"/>
    <property type="evidence" value="ECO:0000318"/>
    <property type="project" value="GO_Central"/>
</dbReference>
<dbReference type="GO" id="GO:0004971">
    <property type="term" value="F:AMPA glutamate receptor activity"/>
    <property type="evidence" value="ECO:0000318"/>
    <property type="project" value="GO_Central"/>
</dbReference>
<dbReference type="GO" id="GO:1904315">
    <property type="term" value="F:transmitter-gated monoatomic ion channel activity involved in regulation of postsynaptic membrane potential"/>
    <property type="evidence" value="ECO:0000318"/>
    <property type="project" value="GO_Central"/>
</dbReference>
<dbReference type="GO" id="GO:0050804">
    <property type="term" value="P:modulation of chemical synaptic transmission"/>
    <property type="evidence" value="ECO:0000318"/>
    <property type="project" value="GO_Central"/>
</dbReference>
<dbReference type="GO" id="GO:0035249">
    <property type="term" value="P:synaptic transmission, glutamatergic"/>
    <property type="evidence" value="ECO:0000318"/>
    <property type="project" value="GO_Central"/>
</dbReference>
<dbReference type="CDD" id="cd13685">
    <property type="entry name" value="PBP2_iGluR_non_NMDA_like"/>
    <property type="match status" value="1"/>
</dbReference>
<dbReference type="FunFam" id="1.10.287.70:FF:000143">
    <property type="entry name" value="Probable glutamate receptor"/>
    <property type="match status" value="1"/>
</dbReference>
<dbReference type="FunFam" id="3.40.190.10:FF:000364">
    <property type="entry name" value="Si:dkey-183j2.10"/>
    <property type="match status" value="1"/>
</dbReference>
<dbReference type="Gene3D" id="1.10.287.70">
    <property type="match status" value="1"/>
</dbReference>
<dbReference type="Gene3D" id="3.40.190.10">
    <property type="entry name" value="Periplasmic binding protein-like II"/>
    <property type="match status" value="2"/>
</dbReference>
<dbReference type="InterPro" id="IPR019594">
    <property type="entry name" value="Glu/Gly-bd"/>
</dbReference>
<dbReference type="InterPro" id="IPR001508">
    <property type="entry name" value="Iono_Glu_rcpt_met"/>
</dbReference>
<dbReference type="InterPro" id="IPR015683">
    <property type="entry name" value="Ionotropic_Glu_rcpt"/>
</dbReference>
<dbReference type="InterPro" id="IPR001320">
    <property type="entry name" value="Iontro_rcpt_C"/>
</dbReference>
<dbReference type="PANTHER" id="PTHR18966">
    <property type="entry name" value="IONOTROPIC GLUTAMATE RECEPTOR"/>
    <property type="match status" value="1"/>
</dbReference>
<dbReference type="Pfam" id="PF00060">
    <property type="entry name" value="Lig_chan"/>
    <property type="match status" value="1"/>
</dbReference>
<dbReference type="Pfam" id="PF10613">
    <property type="entry name" value="Lig_chan-Glu_bd"/>
    <property type="match status" value="1"/>
</dbReference>
<dbReference type="PRINTS" id="PR00177">
    <property type="entry name" value="NMDARECEPTOR"/>
</dbReference>
<dbReference type="SMART" id="SM00918">
    <property type="entry name" value="Lig_chan-Glu_bd"/>
    <property type="match status" value="1"/>
</dbReference>
<dbReference type="SMART" id="SM00079">
    <property type="entry name" value="PBPe"/>
    <property type="match status" value="1"/>
</dbReference>
<dbReference type="SUPFAM" id="SSF53850">
    <property type="entry name" value="Periplasmic binding protein-like II"/>
    <property type="match status" value="1"/>
</dbReference>
<dbReference type="SUPFAM" id="SSF81324">
    <property type="entry name" value="Voltage-gated potassium channels"/>
    <property type="match status" value="1"/>
</dbReference>
<protein>
    <recommendedName>
        <fullName>Probable glutamate receptor</fullName>
    </recommendedName>
    <alternativeName>
        <fullName>Kainate-binding protein</fullName>
    </alternativeName>
</protein>
<evidence type="ECO:0000255" key="1"/>
<evidence type="ECO:0000305" key="2"/>
<keyword id="KW-1003">Cell membrane</keyword>
<keyword id="KW-0903">Direct protein sequencing</keyword>
<keyword id="KW-0325">Glycoprotein</keyword>
<keyword id="KW-0407">Ion channel</keyword>
<keyword id="KW-0406">Ion transport</keyword>
<keyword id="KW-1071">Ligand-gated ion channel</keyword>
<keyword id="KW-0472">Membrane</keyword>
<keyword id="KW-0628">Postsynaptic cell membrane</keyword>
<keyword id="KW-0675">Receptor</keyword>
<keyword id="KW-1185">Reference proteome</keyword>
<keyword id="KW-0732">Signal</keyword>
<keyword id="KW-0770">Synapse</keyword>
<keyword id="KW-0812">Transmembrane</keyword>
<keyword id="KW-1133">Transmembrane helix</keyword>
<keyword id="KW-0813">Transport</keyword>
<sequence>MDKGLHFIFCVVTAVLLLRESSQTGAMRNDDAMIKPNDLRGPEENLPSLTVTTILEDPYVMVRSAELEGYCIDLLKALASMLHFSYKVKVVGDGKYGAISPSGNWTGMIGEILRQEADIAVAPLTVTSAREEVVSFTTPFLQTGIGILLRKETISQEMSFFHFLAPFSKETWTGLLFAYVLTCVCLFLVARLSPCEWNEPKNEENHFTFLNSLWFGAGALTLQGVTPRPKAFSVRVIAAIWWLFTIALLAAYIANFTALLSSGSEQLSIQTFEDLVKQRKLEFGTLDGSSTFYFFKNSKNPIHRMVYEYMDKRRDHVLVKTYQEAVQRVMESNYAFIGESISQDLAAARHCNLIRAPEVIGARGFGIATAQASPWTKKLSVAVLKLRETGDLDYLRNKWWESSCLHKSREGWSPLQPQALGGLFLTLAIGLALGVIAAMVELSNKSRHAAGHIKKSCCSIFTEEMCTRLRIKENTRQTQETSGRANA</sequence>
<organism>
    <name type="scientific">Gallus gallus</name>
    <name type="common">Chicken</name>
    <dbReference type="NCBI Taxonomy" id="9031"/>
    <lineage>
        <taxon>Eukaryota</taxon>
        <taxon>Metazoa</taxon>
        <taxon>Chordata</taxon>
        <taxon>Craniata</taxon>
        <taxon>Vertebrata</taxon>
        <taxon>Euteleostomi</taxon>
        <taxon>Archelosauria</taxon>
        <taxon>Archosauria</taxon>
        <taxon>Dinosauria</taxon>
        <taxon>Saurischia</taxon>
        <taxon>Theropoda</taxon>
        <taxon>Coelurosauria</taxon>
        <taxon>Aves</taxon>
        <taxon>Neognathae</taxon>
        <taxon>Galloanserae</taxon>
        <taxon>Galliformes</taxon>
        <taxon>Phasianidae</taxon>
        <taxon>Phasianinae</taxon>
        <taxon>Gallus</taxon>
    </lineage>
</organism>